<feature type="signal peptide" evidence="2">
    <location>
        <begin position="1"/>
        <end position="22"/>
    </location>
</feature>
<feature type="chain" id="PRO_5002677566" description="Cytochrome P450 monooxygenase pynD">
    <location>
        <begin position="23"/>
        <end position="482"/>
    </location>
</feature>
<feature type="binding site" description="axial binding residue" evidence="1">
    <location>
        <position position="417"/>
    </location>
    <ligand>
        <name>heme</name>
        <dbReference type="ChEBI" id="CHEBI:30413"/>
    </ligand>
    <ligandPart>
        <name>Fe</name>
        <dbReference type="ChEBI" id="CHEBI:18248"/>
    </ligandPart>
</feature>
<feature type="glycosylation site" description="N-linked (GlcNAc...) asparagine" evidence="3">
    <location>
        <position position="401"/>
    </location>
</feature>
<sequence length="482" mass="54997">MWRIPVIVALVAGLLYWVRKQGSQPSRKIPQPRIGLPVVGDAHAFGKSPISYIRQATARCGPVFQINLLLTKIVMLRGAQLNRFYLDTREEVWSFGDGMGLFLEKVVVPGYLSHLKEMVSSLNRGVIRSIALEHYTRIAGEEARKIATNWAEKPDIEVFEQMSRYTHRVIVRCLMGQDFYDHHLDELLDLLHRMEADIGHPFHFLLPNWVPHGPARRLHHARDRMAAIFNERLQAREQNPEKWQDSLDYIAYTLKDSRTAHLRQYFAAHHTLLMFAAHTSTVASIAWTVLELLRNPTHLEALKTALATDADIHRSPTLIATLKETSRRYSGVNMIRWARQPHQLPADAAPGKGNIVVPENCIVSISPYLTHHDPETYADPHIWDPTRWLEGGRLSETQKSNRSEVTYFPFGAGCHRCPGEQMAGMIAREMVAHMVKTYDVRWSSTGPPEDFEQLDFSRVGSAWLKGDARVTVKRDKQGMEEA</sequence>
<organism>
    <name type="scientific">Aspergillus niger (strain ATCC MYA-4892 / CBS 513.88 / FGSC A1513)</name>
    <dbReference type="NCBI Taxonomy" id="425011"/>
    <lineage>
        <taxon>Eukaryota</taxon>
        <taxon>Fungi</taxon>
        <taxon>Dikarya</taxon>
        <taxon>Ascomycota</taxon>
        <taxon>Pezizomycotina</taxon>
        <taxon>Eurotiomycetes</taxon>
        <taxon>Eurotiomycetidae</taxon>
        <taxon>Eurotiales</taxon>
        <taxon>Aspergillaceae</taxon>
        <taxon>Aspergillus</taxon>
        <taxon>Aspergillus subgen. Circumdati</taxon>
    </lineage>
</organism>
<evidence type="ECO:0000250" key="1">
    <source>
        <dbReference type="UniProtKB" id="P04798"/>
    </source>
</evidence>
<evidence type="ECO:0000255" key="2"/>
<evidence type="ECO:0000255" key="3">
    <source>
        <dbReference type="PROSITE-ProRule" id="PRU00498"/>
    </source>
</evidence>
<evidence type="ECO:0000269" key="4">
    <source>
    </source>
</evidence>
<evidence type="ECO:0000269" key="5">
    <source>
    </source>
</evidence>
<evidence type="ECO:0000303" key="6">
    <source>
    </source>
</evidence>
<evidence type="ECO:0000305" key="7"/>
<evidence type="ECO:0000305" key="8">
    <source>
    </source>
</evidence>
<comment type="function">
    <text evidence="4 5 8">Cytochrome P450 monooxygenase; part of the gene cluster that mediates the biosynthesis of pyranonigrins, a family of antioxidative compounds (PubMed:24106156, PubMed:26414728). The first step of pyranonigrins biosynthesis is performed by the hybrid PKS-NRPS synthetase that condenses 6 malonyl-CoA units to an acetyl starter unit, to form a 1,3,5-trioxotetradecane-6,8-dienyl-ACP (PubMed:24106156). The enoyl reductase (ER) domain of pynA is likely to be functional during the first two rounds of polyketide chain extension, to generate the saturated C-C bonds of the alkyl side chain (Probable). PynA subsequently forms the amide bond between the acyl chain and L-serine (PubMed:24106156, PubMed:26414728). Although pynA has a terminal reductase domain, it appears to require the thioesterase pynI for the release of the straight-chain intermediate from pynA via the formation of a tetramic acid pyranonigrin J (PubMed:26414728). The methyltransferase pynC then coverts pyranonigrin J to pyranonigrin I via N-methylation (PubMed:26414728). The FAD-dependent monooxygenase pynG catalyzes an epoxidation-mediated cyclization to form the dihydro-gamma-pyrone moiety, followed by pynD-catalyzed oxidation of the alcohol to the ketone and enolization to yield the characteristic tetramic acid-fused gamma-pyrone core of pyranonigrin H (PubMed:26414728). Pyranonigrin H is substrate of pynH for dehydration-mediated exo-methylene formation from the serine side chain to produce pyranonigrin E, before the oxidase pynE reduces the exo-methylene of pyranonigrin E into a pendant methyl to form pyranonigrin G (PubMed:26414728). The FAD-linked oxidoreductase pynB performs the reverse reaction and converts pyranonigrin G back to pyranonigrin E (PubMed:26414728).</text>
</comment>
<comment type="cofactor">
    <cofactor evidence="1">
        <name>heme</name>
        <dbReference type="ChEBI" id="CHEBI:30413"/>
    </cofactor>
</comment>
<comment type="pathway">
    <text evidence="5">Secondary metabolite biosynthesis.</text>
</comment>
<comment type="induction">
    <text evidence="4">Expression is positively regulated by the cluster-specific transcription factor pynR.</text>
</comment>
<comment type="disruption phenotype">
    <text evidence="5">Leads to the accumulation of pyranonigrin J.</text>
</comment>
<comment type="similarity">
    <text evidence="7">Belongs to the cytochrome P450 family.</text>
</comment>
<keyword id="KW-0325">Glycoprotein</keyword>
<keyword id="KW-0349">Heme</keyword>
<keyword id="KW-0408">Iron</keyword>
<keyword id="KW-0479">Metal-binding</keyword>
<keyword id="KW-0503">Monooxygenase</keyword>
<keyword id="KW-0560">Oxidoreductase</keyword>
<keyword id="KW-1185">Reference proteome</keyword>
<keyword id="KW-0732">Signal</keyword>
<gene>
    <name evidence="6" type="primary">pynD</name>
    <name type="ORF">An11g00270</name>
</gene>
<reference key="1">
    <citation type="journal article" date="2007" name="Nat. Biotechnol.">
        <title>Genome sequencing and analysis of the versatile cell factory Aspergillus niger CBS 513.88.</title>
        <authorList>
            <person name="Pel H.J."/>
            <person name="de Winde J.H."/>
            <person name="Archer D.B."/>
            <person name="Dyer P.S."/>
            <person name="Hofmann G."/>
            <person name="Schaap P.J."/>
            <person name="Turner G."/>
            <person name="de Vries R.P."/>
            <person name="Albang R."/>
            <person name="Albermann K."/>
            <person name="Andersen M.R."/>
            <person name="Bendtsen J.D."/>
            <person name="Benen J.A.E."/>
            <person name="van den Berg M."/>
            <person name="Breestraat S."/>
            <person name="Caddick M.X."/>
            <person name="Contreras R."/>
            <person name="Cornell M."/>
            <person name="Coutinho P.M."/>
            <person name="Danchin E.G.J."/>
            <person name="Debets A.J.M."/>
            <person name="Dekker P."/>
            <person name="van Dijck P.W.M."/>
            <person name="van Dijk A."/>
            <person name="Dijkhuizen L."/>
            <person name="Driessen A.J.M."/>
            <person name="d'Enfert C."/>
            <person name="Geysens S."/>
            <person name="Goosen C."/>
            <person name="Groot G.S.P."/>
            <person name="de Groot P.W.J."/>
            <person name="Guillemette T."/>
            <person name="Henrissat B."/>
            <person name="Herweijer M."/>
            <person name="van den Hombergh J.P.T.W."/>
            <person name="van den Hondel C.A.M.J.J."/>
            <person name="van der Heijden R.T.J.M."/>
            <person name="van der Kaaij R.M."/>
            <person name="Klis F.M."/>
            <person name="Kools H.J."/>
            <person name="Kubicek C.P."/>
            <person name="van Kuyk P.A."/>
            <person name="Lauber J."/>
            <person name="Lu X."/>
            <person name="van der Maarel M.J.E.C."/>
            <person name="Meulenberg R."/>
            <person name="Menke H."/>
            <person name="Mortimer M.A."/>
            <person name="Nielsen J."/>
            <person name="Oliver S.G."/>
            <person name="Olsthoorn M."/>
            <person name="Pal K."/>
            <person name="van Peij N.N.M.E."/>
            <person name="Ram A.F.J."/>
            <person name="Rinas U."/>
            <person name="Roubos J.A."/>
            <person name="Sagt C.M.J."/>
            <person name="Schmoll M."/>
            <person name="Sun J."/>
            <person name="Ussery D."/>
            <person name="Varga J."/>
            <person name="Vervecken W."/>
            <person name="van de Vondervoort P.J.J."/>
            <person name="Wedler H."/>
            <person name="Woesten H.A.B."/>
            <person name="Zeng A.-P."/>
            <person name="van Ooyen A.J.J."/>
            <person name="Visser J."/>
            <person name="Stam H."/>
        </authorList>
    </citation>
    <scope>NUCLEOTIDE SEQUENCE [LARGE SCALE GENOMIC DNA]</scope>
    <source>
        <strain>ATCC MYA-4892 / CBS 513.88 / FGSC A1513</strain>
    </source>
</reference>
<reference key="2">
    <citation type="journal article" date="2013" name="ChemBioChem">
        <title>Pyranonigrin E: a PKS-NRPS hybrid metabolite from Aspergillus niger identified by genome mining.</title>
        <authorList>
            <person name="Awakawa T."/>
            <person name="Yang X.L."/>
            <person name="Wakimoto T."/>
            <person name="Abe I."/>
        </authorList>
    </citation>
    <scope>FUNCTION</scope>
    <scope>INDUCTION</scope>
</reference>
<reference key="3">
    <citation type="journal article" date="2015" name="Org. Lett.">
        <title>Elucidation of pyranonigrin biosynthetic pathway reveals a mode of tetramic acid, fused gamma-pyrone, and exo-methylene formation.</title>
        <authorList>
            <person name="Yamamoto T."/>
            <person name="Tsunematsu Y."/>
            <person name="Noguchi H."/>
            <person name="Hotta K."/>
            <person name="Watanabe K."/>
        </authorList>
    </citation>
    <scope>FUNCTION</scope>
    <scope>DISRUPTION PHENOTYPE</scope>
    <scope>CATALYTIC ACTIVITY</scope>
    <scope>PATHWAY</scope>
</reference>
<proteinExistence type="evidence at protein level"/>
<protein>
    <recommendedName>
        <fullName evidence="6">Cytochrome P450 monooxygenase pynD</fullName>
        <ecNumber evidence="5">1.14.14.-</ecNumber>
    </recommendedName>
    <alternativeName>
        <fullName evidence="6">Pyranonigrin biosynthesis cluster protein D</fullName>
    </alternativeName>
</protein>
<accession>A5ABG2</accession>
<dbReference type="EC" id="1.14.14.-" evidence="5"/>
<dbReference type="EMBL" id="AM270218">
    <property type="protein sequence ID" value="CAK48260.1"/>
    <property type="molecule type" value="Genomic_DNA"/>
</dbReference>
<dbReference type="RefSeq" id="XP_001394031.1">
    <property type="nucleotide sequence ID" value="XM_001393994.1"/>
</dbReference>
<dbReference type="SMR" id="A5ABG2"/>
<dbReference type="GlyCosmos" id="A5ABG2">
    <property type="glycosylation" value="1 site, No reported glycans"/>
</dbReference>
<dbReference type="EnsemblFungi" id="CAK48260">
    <property type="protein sequence ID" value="CAK48260"/>
    <property type="gene ID" value="An11g00270"/>
</dbReference>
<dbReference type="GeneID" id="4984247"/>
<dbReference type="KEGG" id="ang:An11g00270"/>
<dbReference type="VEuPathDB" id="FungiDB:An11g00270"/>
<dbReference type="HOGENOM" id="CLU_045283_0_0_1"/>
<dbReference type="Proteomes" id="UP000006706">
    <property type="component" value="Chromosome 7R"/>
</dbReference>
<dbReference type="GO" id="GO:0020037">
    <property type="term" value="F:heme binding"/>
    <property type="evidence" value="ECO:0007669"/>
    <property type="project" value="InterPro"/>
</dbReference>
<dbReference type="GO" id="GO:0005506">
    <property type="term" value="F:iron ion binding"/>
    <property type="evidence" value="ECO:0007669"/>
    <property type="project" value="InterPro"/>
</dbReference>
<dbReference type="GO" id="GO:0004497">
    <property type="term" value="F:monooxygenase activity"/>
    <property type="evidence" value="ECO:0007669"/>
    <property type="project" value="UniProtKB-KW"/>
</dbReference>
<dbReference type="GO" id="GO:0016705">
    <property type="term" value="F:oxidoreductase activity, acting on paired donors, with incorporation or reduction of molecular oxygen"/>
    <property type="evidence" value="ECO:0007669"/>
    <property type="project" value="InterPro"/>
</dbReference>
<dbReference type="GO" id="GO:0019748">
    <property type="term" value="P:secondary metabolic process"/>
    <property type="evidence" value="ECO:0000317"/>
    <property type="project" value="AspGD"/>
</dbReference>
<dbReference type="CDD" id="cd11042">
    <property type="entry name" value="CYP51-like"/>
    <property type="match status" value="1"/>
</dbReference>
<dbReference type="FunFam" id="1.10.630.10:FF:000168">
    <property type="entry name" value="Cytochrome P450"/>
    <property type="match status" value="1"/>
</dbReference>
<dbReference type="Gene3D" id="1.10.630.10">
    <property type="entry name" value="Cytochrome P450"/>
    <property type="match status" value="1"/>
</dbReference>
<dbReference type="InterPro" id="IPR050529">
    <property type="entry name" value="CYP450_sterol_14alpha_dmase"/>
</dbReference>
<dbReference type="InterPro" id="IPR001128">
    <property type="entry name" value="Cyt_P450"/>
</dbReference>
<dbReference type="InterPro" id="IPR017972">
    <property type="entry name" value="Cyt_P450_CS"/>
</dbReference>
<dbReference type="InterPro" id="IPR002403">
    <property type="entry name" value="Cyt_P450_E_grp-IV"/>
</dbReference>
<dbReference type="InterPro" id="IPR036396">
    <property type="entry name" value="Cyt_P450_sf"/>
</dbReference>
<dbReference type="PANTHER" id="PTHR24304:SF2">
    <property type="entry name" value="24-HYDROXYCHOLESTEROL 7-ALPHA-HYDROXYLASE"/>
    <property type="match status" value="1"/>
</dbReference>
<dbReference type="PANTHER" id="PTHR24304">
    <property type="entry name" value="CYTOCHROME P450 FAMILY 7"/>
    <property type="match status" value="1"/>
</dbReference>
<dbReference type="Pfam" id="PF00067">
    <property type="entry name" value="p450"/>
    <property type="match status" value="1"/>
</dbReference>
<dbReference type="PRINTS" id="PR00465">
    <property type="entry name" value="EP450IV"/>
</dbReference>
<dbReference type="SUPFAM" id="SSF48264">
    <property type="entry name" value="Cytochrome P450"/>
    <property type="match status" value="1"/>
</dbReference>
<dbReference type="PROSITE" id="PS00086">
    <property type="entry name" value="CYTOCHROME_P450"/>
    <property type="match status" value="1"/>
</dbReference>
<name>PYND_ASPNC</name>